<keyword id="KW-0028">Amino-acid biosynthesis</keyword>
<keyword id="KW-0057">Aromatic amino acid biosynthesis</keyword>
<keyword id="KW-0456">Lyase</keyword>
<keyword id="KW-0822">Tryptophan biosynthesis</keyword>
<dbReference type="EC" id="4.2.1.20" evidence="1"/>
<dbReference type="EMBL" id="CP000547">
    <property type="protein sequence ID" value="ABO01893.1"/>
    <property type="molecule type" value="Genomic_DNA"/>
</dbReference>
<dbReference type="RefSeq" id="WP_004187543.1">
    <property type="nucleotide sequence ID" value="NZ_CP007801.1"/>
</dbReference>
<dbReference type="SMR" id="A3MBU6"/>
<dbReference type="GeneID" id="92977654"/>
<dbReference type="KEGG" id="bmaz:BM44_3232"/>
<dbReference type="KEGG" id="bmn:BMA10247_A0531"/>
<dbReference type="PATRIC" id="fig|320389.8.peg.3629"/>
<dbReference type="UniPathway" id="UPA00035">
    <property type="reaction ID" value="UER00044"/>
</dbReference>
<dbReference type="GO" id="GO:0005829">
    <property type="term" value="C:cytosol"/>
    <property type="evidence" value="ECO:0007669"/>
    <property type="project" value="TreeGrafter"/>
</dbReference>
<dbReference type="GO" id="GO:0004834">
    <property type="term" value="F:tryptophan synthase activity"/>
    <property type="evidence" value="ECO:0007669"/>
    <property type="project" value="UniProtKB-UniRule"/>
</dbReference>
<dbReference type="CDD" id="cd04724">
    <property type="entry name" value="Tryptophan_synthase_alpha"/>
    <property type="match status" value="1"/>
</dbReference>
<dbReference type="FunFam" id="3.20.20.70:FF:000037">
    <property type="entry name" value="Tryptophan synthase alpha chain"/>
    <property type="match status" value="1"/>
</dbReference>
<dbReference type="Gene3D" id="3.20.20.70">
    <property type="entry name" value="Aldolase class I"/>
    <property type="match status" value="1"/>
</dbReference>
<dbReference type="HAMAP" id="MF_00131">
    <property type="entry name" value="Trp_synth_alpha"/>
    <property type="match status" value="1"/>
</dbReference>
<dbReference type="InterPro" id="IPR013785">
    <property type="entry name" value="Aldolase_TIM"/>
</dbReference>
<dbReference type="InterPro" id="IPR011060">
    <property type="entry name" value="RibuloseP-bd_barrel"/>
</dbReference>
<dbReference type="InterPro" id="IPR018204">
    <property type="entry name" value="Trp_synthase_alpha_AS"/>
</dbReference>
<dbReference type="InterPro" id="IPR002028">
    <property type="entry name" value="Trp_synthase_suA"/>
</dbReference>
<dbReference type="NCBIfam" id="TIGR00262">
    <property type="entry name" value="trpA"/>
    <property type="match status" value="1"/>
</dbReference>
<dbReference type="PANTHER" id="PTHR43406:SF1">
    <property type="entry name" value="TRYPTOPHAN SYNTHASE ALPHA CHAIN, CHLOROPLASTIC"/>
    <property type="match status" value="1"/>
</dbReference>
<dbReference type="PANTHER" id="PTHR43406">
    <property type="entry name" value="TRYPTOPHAN SYNTHASE, ALPHA CHAIN"/>
    <property type="match status" value="1"/>
</dbReference>
<dbReference type="Pfam" id="PF00290">
    <property type="entry name" value="Trp_syntA"/>
    <property type="match status" value="1"/>
</dbReference>
<dbReference type="SUPFAM" id="SSF51366">
    <property type="entry name" value="Ribulose-phoshate binding barrel"/>
    <property type="match status" value="1"/>
</dbReference>
<dbReference type="PROSITE" id="PS00167">
    <property type="entry name" value="TRP_SYNTHASE_ALPHA"/>
    <property type="match status" value="1"/>
</dbReference>
<feature type="chain" id="PRO_1000018175" description="Tryptophan synthase alpha chain">
    <location>
        <begin position="1"/>
        <end position="271"/>
    </location>
</feature>
<feature type="active site" description="Proton acceptor" evidence="1">
    <location>
        <position position="49"/>
    </location>
</feature>
<feature type="active site" description="Proton acceptor" evidence="1">
    <location>
        <position position="60"/>
    </location>
</feature>
<reference key="1">
    <citation type="journal article" date="2010" name="Genome Biol. Evol.">
        <title>Continuing evolution of Burkholderia mallei through genome reduction and large-scale rearrangements.</title>
        <authorList>
            <person name="Losada L."/>
            <person name="Ronning C.M."/>
            <person name="DeShazer D."/>
            <person name="Woods D."/>
            <person name="Fedorova N."/>
            <person name="Kim H.S."/>
            <person name="Shabalina S.A."/>
            <person name="Pearson T.R."/>
            <person name="Brinkac L."/>
            <person name="Tan P."/>
            <person name="Nandi T."/>
            <person name="Crabtree J."/>
            <person name="Badger J."/>
            <person name="Beckstrom-Sternberg S."/>
            <person name="Saqib M."/>
            <person name="Schutzer S.E."/>
            <person name="Keim P."/>
            <person name="Nierman W.C."/>
        </authorList>
    </citation>
    <scope>NUCLEOTIDE SEQUENCE [LARGE SCALE GENOMIC DNA]</scope>
    <source>
        <strain>NCTC 10247</strain>
    </source>
</reference>
<comment type="function">
    <text evidence="1">The alpha subunit is responsible for the aldol cleavage of indoleglycerol phosphate to indole and glyceraldehyde 3-phosphate.</text>
</comment>
<comment type="catalytic activity">
    <reaction evidence="1">
        <text>(1S,2R)-1-C-(indol-3-yl)glycerol 3-phosphate + L-serine = D-glyceraldehyde 3-phosphate + L-tryptophan + H2O</text>
        <dbReference type="Rhea" id="RHEA:10532"/>
        <dbReference type="ChEBI" id="CHEBI:15377"/>
        <dbReference type="ChEBI" id="CHEBI:33384"/>
        <dbReference type="ChEBI" id="CHEBI:57912"/>
        <dbReference type="ChEBI" id="CHEBI:58866"/>
        <dbReference type="ChEBI" id="CHEBI:59776"/>
        <dbReference type="EC" id="4.2.1.20"/>
    </reaction>
</comment>
<comment type="pathway">
    <text evidence="1">Amino-acid biosynthesis; L-tryptophan biosynthesis; L-tryptophan from chorismate: step 5/5.</text>
</comment>
<comment type="subunit">
    <text evidence="1">Tetramer of two alpha and two beta chains.</text>
</comment>
<comment type="similarity">
    <text evidence="1">Belongs to the TrpA family.</text>
</comment>
<name>TRPA_BURM7</name>
<organism>
    <name type="scientific">Burkholderia mallei (strain NCTC 10247)</name>
    <dbReference type="NCBI Taxonomy" id="320389"/>
    <lineage>
        <taxon>Bacteria</taxon>
        <taxon>Pseudomonadati</taxon>
        <taxon>Pseudomonadota</taxon>
        <taxon>Betaproteobacteria</taxon>
        <taxon>Burkholderiales</taxon>
        <taxon>Burkholderiaceae</taxon>
        <taxon>Burkholderia</taxon>
        <taxon>pseudomallei group</taxon>
    </lineage>
</organism>
<evidence type="ECO:0000255" key="1">
    <source>
        <dbReference type="HAMAP-Rule" id="MF_00131"/>
    </source>
</evidence>
<accession>A3MBU6</accession>
<protein>
    <recommendedName>
        <fullName evidence="1">Tryptophan synthase alpha chain</fullName>
        <ecNumber evidence="1">4.2.1.20</ecNumber>
    </recommendedName>
</protein>
<gene>
    <name evidence="1" type="primary">trpA</name>
    <name type="ordered locus">BMA10247_A0531</name>
</gene>
<sequence>MSRIQNTFAALAAQGRKGLIPFITAGDPDPAKTVELMHALAEGGADVIELGVPFSDPMADGPVIQRSSERALAKGVTLHSVLDDVKRFRARDQKTPVVLMGYANPIERMGADAFAAAARDAGVDGVLVVDYPPEESHDFAAKMRAAGIDPIFLLAPTSTDDRIAAVGQVASGYVYYVSLKGVTGAANLDVSSIAGKIPAIKSRVPLPVGVGFGIRDAATARAVAEVADAVVIGSRLVQLLEQAVPERAAAELAGFVAELRAAIDGAAKPAA</sequence>
<proteinExistence type="inferred from homology"/>